<reference key="1">
    <citation type="journal article" date="2000" name="Science">
        <title>The genome sequence of Drosophila melanogaster.</title>
        <authorList>
            <person name="Adams M.D."/>
            <person name="Celniker S.E."/>
            <person name="Holt R.A."/>
            <person name="Evans C.A."/>
            <person name="Gocayne J.D."/>
            <person name="Amanatides P.G."/>
            <person name="Scherer S.E."/>
            <person name="Li P.W."/>
            <person name="Hoskins R.A."/>
            <person name="Galle R.F."/>
            <person name="George R.A."/>
            <person name="Lewis S.E."/>
            <person name="Richards S."/>
            <person name="Ashburner M."/>
            <person name="Henderson S.N."/>
            <person name="Sutton G.G."/>
            <person name="Wortman J.R."/>
            <person name="Yandell M.D."/>
            <person name="Zhang Q."/>
            <person name="Chen L.X."/>
            <person name="Brandon R.C."/>
            <person name="Rogers Y.-H.C."/>
            <person name="Blazej R.G."/>
            <person name="Champe M."/>
            <person name="Pfeiffer B.D."/>
            <person name="Wan K.H."/>
            <person name="Doyle C."/>
            <person name="Baxter E.G."/>
            <person name="Helt G."/>
            <person name="Nelson C.R."/>
            <person name="Miklos G.L.G."/>
            <person name="Abril J.F."/>
            <person name="Agbayani A."/>
            <person name="An H.-J."/>
            <person name="Andrews-Pfannkoch C."/>
            <person name="Baldwin D."/>
            <person name="Ballew R.M."/>
            <person name="Basu A."/>
            <person name="Baxendale J."/>
            <person name="Bayraktaroglu L."/>
            <person name="Beasley E.M."/>
            <person name="Beeson K.Y."/>
            <person name="Benos P.V."/>
            <person name="Berman B.P."/>
            <person name="Bhandari D."/>
            <person name="Bolshakov S."/>
            <person name="Borkova D."/>
            <person name="Botchan M.R."/>
            <person name="Bouck J."/>
            <person name="Brokstein P."/>
            <person name="Brottier P."/>
            <person name="Burtis K.C."/>
            <person name="Busam D.A."/>
            <person name="Butler H."/>
            <person name="Cadieu E."/>
            <person name="Center A."/>
            <person name="Chandra I."/>
            <person name="Cherry J.M."/>
            <person name="Cawley S."/>
            <person name="Dahlke C."/>
            <person name="Davenport L.B."/>
            <person name="Davies P."/>
            <person name="de Pablos B."/>
            <person name="Delcher A."/>
            <person name="Deng Z."/>
            <person name="Mays A.D."/>
            <person name="Dew I."/>
            <person name="Dietz S.M."/>
            <person name="Dodson K."/>
            <person name="Doup L.E."/>
            <person name="Downes M."/>
            <person name="Dugan-Rocha S."/>
            <person name="Dunkov B.C."/>
            <person name="Dunn P."/>
            <person name="Durbin K.J."/>
            <person name="Evangelista C.C."/>
            <person name="Ferraz C."/>
            <person name="Ferriera S."/>
            <person name="Fleischmann W."/>
            <person name="Fosler C."/>
            <person name="Gabrielian A.E."/>
            <person name="Garg N.S."/>
            <person name="Gelbart W.M."/>
            <person name="Glasser K."/>
            <person name="Glodek A."/>
            <person name="Gong F."/>
            <person name="Gorrell J.H."/>
            <person name="Gu Z."/>
            <person name="Guan P."/>
            <person name="Harris M."/>
            <person name="Harris N.L."/>
            <person name="Harvey D.A."/>
            <person name="Heiman T.J."/>
            <person name="Hernandez J.R."/>
            <person name="Houck J."/>
            <person name="Hostin D."/>
            <person name="Houston K.A."/>
            <person name="Howland T.J."/>
            <person name="Wei M.-H."/>
            <person name="Ibegwam C."/>
            <person name="Jalali M."/>
            <person name="Kalush F."/>
            <person name="Karpen G.H."/>
            <person name="Ke Z."/>
            <person name="Kennison J.A."/>
            <person name="Ketchum K.A."/>
            <person name="Kimmel B.E."/>
            <person name="Kodira C.D."/>
            <person name="Kraft C.L."/>
            <person name="Kravitz S."/>
            <person name="Kulp D."/>
            <person name="Lai Z."/>
            <person name="Lasko P."/>
            <person name="Lei Y."/>
            <person name="Levitsky A.A."/>
            <person name="Li J.H."/>
            <person name="Li Z."/>
            <person name="Liang Y."/>
            <person name="Lin X."/>
            <person name="Liu X."/>
            <person name="Mattei B."/>
            <person name="McIntosh T.C."/>
            <person name="McLeod M.P."/>
            <person name="McPherson D."/>
            <person name="Merkulov G."/>
            <person name="Milshina N.V."/>
            <person name="Mobarry C."/>
            <person name="Morris J."/>
            <person name="Moshrefi A."/>
            <person name="Mount S.M."/>
            <person name="Moy M."/>
            <person name="Murphy B."/>
            <person name="Murphy L."/>
            <person name="Muzny D.M."/>
            <person name="Nelson D.L."/>
            <person name="Nelson D.R."/>
            <person name="Nelson K.A."/>
            <person name="Nixon K."/>
            <person name="Nusskern D.R."/>
            <person name="Pacleb J.M."/>
            <person name="Palazzolo M."/>
            <person name="Pittman G.S."/>
            <person name="Pan S."/>
            <person name="Pollard J."/>
            <person name="Puri V."/>
            <person name="Reese M.G."/>
            <person name="Reinert K."/>
            <person name="Remington K."/>
            <person name="Saunders R.D.C."/>
            <person name="Scheeler F."/>
            <person name="Shen H."/>
            <person name="Shue B.C."/>
            <person name="Siden-Kiamos I."/>
            <person name="Simpson M."/>
            <person name="Skupski M.P."/>
            <person name="Smith T.J."/>
            <person name="Spier E."/>
            <person name="Spradling A.C."/>
            <person name="Stapleton M."/>
            <person name="Strong R."/>
            <person name="Sun E."/>
            <person name="Svirskas R."/>
            <person name="Tector C."/>
            <person name="Turner R."/>
            <person name="Venter E."/>
            <person name="Wang A.H."/>
            <person name="Wang X."/>
            <person name="Wang Z.-Y."/>
            <person name="Wassarman D.A."/>
            <person name="Weinstock G.M."/>
            <person name="Weissenbach J."/>
            <person name="Williams S.M."/>
            <person name="Woodage T."/>
            <person name="Worley K.C."/>
            <person name="Wu D."/>
            <person name="Yang S."/>
            <person name="Yao Q.A."/>
            <person name="Ye J."/>
            <person name="Yeh R.-F."/>
            <person name="Zaveri J.S."/>
            <person name="Zhan M."/>
            <person name="Zhang G."/>
            <person name="Zhao Q."/>
            <person name="Zheng L."/>
            <person name="Zheng X.H."/>
            <person name="Zhong F.N."/>
            <person name="Zhong W."/>
            <person name="Zhou X."/>
            <person name="Zhu S.C."/>
            <person name="Zhu X."/>
            <person name="Smith H.O."/>
            <person name="Gibbs R.A."/>
            <person name="Myers E.W."/>
            <person name="Rubin G.M."/>
            <person name="Venter J.C."/>
        </authorList>
    </citation>
    <scope>NUCLEOTIDE SEQUENCE [LARGE SCALE GENOMIC DNA]</scope>
    <source>
        <strain>Berkeley</strain>
    </source>
</reference>
<reference key="2">
    <citation type="journal article" date="2002" name="Genome Biol.">
        <title>Annotation of the Drosophila melanogaster euchromatic genome: a systematic review.</title>
        <authorList>
            <person name="Misra S."/>
            <person name="Crosby M.A."/>
            <person name="Mungall C.J."/>
            <person name="Matthews B.B."/>
            <person name="Campbell K.S."/>
            <person name="Hradecky P."/>
            <person name="Huang Y."/>
            <person name="Kaminker J.S."/>
            <person name="Millburn G.H."/>
            <person name="Prochnik S.E."/>
            <person name="Smith C.D."/>
            <person name="Tupy J.L."/>
            <person name="Whitfield E.J."/>
            <person name="Bayraktaroglu L."/>
            <person name="Berman B.P."/>
            <person name="Bettencourt B.R."/>
            <person name="Celniker S.E."/>
            <person name="de Grey A.D.N.J."/>
            <person name="Drysdale R.A."/>
            <person name="Harris N.L."/>
            <person name="Richter J."/>
            <person name="Russo S."/>
            <person name="Schroeder A.J."/>
            <person name="Shu S.Q."/>
            <person name="Stapleton M."/>
            <person name="Yamada C."/>
            <person name="Ashburner M."/>
            <person name="Gelbart W.M."/>
            <person name="Rubin G.M."/>
            <person name="Lewis S.E."/>
        </authorList>
    </citation>
    <scope>GENOME REANNOTATION</scope>
    <source>
        <strain>Berkeley</strain>
    </source>
</reference>
<reference key="3">
    <citation type="journal article" date="2002" name="Genome Biol.">
        <title>A Drosophila full-length cDNA resource.</title>
        <authorList>
            <person name="Stapleton M."/>
            <person name="Carlson J.W."/>
            <person name="Brokstein P."/>
            <person name="Yu C."/>
            <person name="Champe M."/>
            <person name="George R.A."/>
            <person name="Guarin H."/>
            <person name="Kronmiller B."/>
            <person name="Pacleb J.M."/>
            <person name="Park S."/>
            <person name="Wan K.H."/>
            <person name="Rubin G.M."/>
            <person name="Celniker S.E."/>
        </authorList>
    </citation>
    <scope>NUCLEOTIDE SEQUENCE [LARGE SCALE MRNA]</scope>
    <source>
        <strain>Berkeley</strain>
        <tissue>Testis</tissue>
    </source>
</reference>
<reference key="4">
    <citation type="journal article" date="2007" name="Mech. Dev.">
        <title>In vivo function of a novel Siah protein in Drosophila.</title>
        <authorList>
            <person name="Cooper S.E."/>
        </authorList>
    </citation>
    <scope>FUNCTION</scope>
    <scope>INTERACTION WITH EBI</scope>
    <scope>DEVELOPMENTAL STAGE</scope>
    <scope>DISRUPTION PHENOTYPE</scope>
</reference>
<reference key="5">
    <citation type="journal article" date="2008" name="J. Biol. Chem.">
        <title>Two modes of degradation of the tramtrack transcription factors by Siah homologues.</title>
        <authorList>
            <person name="Cooper S.E."/>
            <person name="Murawsky C.M."/>
            <person name="Lowe N."/>
            <person name="Travers A.A."/>
        </authorList>
    </citation>
    <scope>FUNCTION</scope>
    <scope>INTERACTION WITH PHYL</scope>
</reference>
<name>SINAL_DROME</name>
<accession>Q8T3Y0</accession>
<accession>Q9VVB1</accession>
<dbReference type="EC" id="2.3.2.27"/>
<dbReference type="EMBL" id="AE014296">
    <property type="protein sequence ID" value="AAF49402.3"/>
    <property type="molecule type" value="Genomic_DNA"/>
</dbReference>
<dbReference type="EMBL" id="AY089445">
    <property type="protein sequence ID" value="AAL90183.1"/>
    <property type="molecule type" value="mRNA"/>
</dbReference>
<dbReference type="RefSeq" id="NP_648927.1">
    <property type="nucleotide sequence ID" value="NM_140670.2"/>
</dbReference>
<dbReference type="SMR" id="Q8T3Y0"/>
<dbReference type="BioGRID" id="65184">
    <property type="interactions" value="96"/>
</dbReference>
<dbReference type="DIP" id="DIP-17367N"/>
<dbReference type="FunCoup" id="Q8T3Y0">
    <property type="interactions" value="272"/>
</dbReference>
<dbReference type="IntAct" id="Q8T3Y0">
    <property type="interactions" value="43"/>
</dbReference>
<dbReference type="STRING" id="7227.FBpp0290897"/>
<dbReference type="PaxDb" id="7227-FBpp0290897"/>
<dbReference type="DNASU" id="39885"/>
<dbReference type="EnsemblMetazoa" id="FBtr0301683">
    <property type="protein sequence ID" value="FBpp0290897"/>
    <property type="gene ID" value="FBgn0259794"/>
</dbReference>
<dbReference type="GeneID" id="39885"/>
<dbReference type="KEGG" id="dme:Dmel_CG13030"/>
<dbReference type="UCSC" id="CG13030-RB">
    <property type="organism name" value="d. melanogaster"/>
</dbReference>
<dbReference type="AGR" id="FB:FBgn0259794"/>
<dbReference type="CTD" id="39885"/>
<dbReference type="FlyBase" id="FBgn0259794">
    <property type="gene designation" value="sinah"/>
</dbReference>
<dbReference type="VEuPathDB" id="VectorBase:FBgn0259794"/>
<dbReference type="eggNOG" id="KOG3002">
    <property type="taxonomic scope" value="Eukaryota"/>
</dbReference>
<dbReference type="HOGENOM" id="CLU_028215_0_0_1"/>
<dbReference type="InParanoid" id="Q8T3Y0"/>
<dbReference type="OMA" id="YIMPPIM"/>
<dbReference type="OrthoDB" id="4788989at2759"/>
<dbReference type="PhylomeDB" id="Q8T3Y0"/>
<dbReference type="Reactome" id="R-DME-373752">
    <property type="pathway name" value="Netrin-1 signaling"/>
</dbReference>
<dbReference type="Reactome" id="R-DME-5689880">
    <property type="pathway name" value="Ub-specific processing proteases"/>
</dbReference>
<dbReference type="Reactome" id="R-DME-983168">
    <property type="pathway name" value="Antigen processing: Ubiquitination &amp; Proteasome degradation"/>
</dbReference>
<dbReference type="UniPathway" id="UPA00143"/>
<dbReference type="BioGRID-ORCS" id="39885">
    <property type="hits" value="0 hits in 1 CRISPR screen"/>
</dbReference>
<dbReference type="GenomeRNAi" id="39885"/>
<dbReference type="PRO" id="PR:Q8T3Y0"/>
<dbReference type="Proteomes" id="UP000000803">
    <property type="component" value="Chromosome 3L"/>
</dbReference>
<dbReference type="Bgee" id="FBgn0259794">
    <property type="expression patterns" value="Expressed in early elongation stage spermatid (Drosophila) in testis and 26 other cell types or tissues"/>
</dbReference>
<dbReference type="ExpressionAtlas" id="Q8T3Y0">
    <property type="expression patterns" value="baseline and differential"/>
</dbReference>
<dbReference type="GO" id="GO:0005737">
    <property type="term" value="C:cytoplasm"/>
    <property type="evidence" value="ECO:0000318"/>
    <property type="project" value="GO_Central"/>
</dbReference>
<dbReference type="GO" id="GO:0005634">
    <property type="term" value="C:nucleus"/>
    <property type="evidence" value="ECO:0000250"/>
    <property type="project" value="UniProtKB"/>
</dbReference>
<dbReference type="GO" id="GO:0031624">
    <property type="term" value="F:ubiquitin conjugating enzyme binding"/>
    <property type="evidence" value="ECO:0000318"/>
    <property type="project" value="GO_Central"/>
</dbReference>
<dbReference type="GO" id="GO:0061630">
    <property type="term" value="F:ubiquitin protein ligase activity"/>
    <property type="evidence" value="ECO:0000318"/>
    <property type="project" value="GO_Central"/>
</dbReference>
<dbReference type="GO" id="GO:0004842">
    <property type="term" value="F:ubiquitin-protein transferase activity"/>
    <property type="evidence" value="ECO:0000250"/>
    <property type="project" value="FlyBase"/>
</dbReference>
<dbReference type="GO" id="GO:0008270">
    <property type="term" value="F:zinc ion binding"/>
    <property type="evidence" value="ECO:0000255"/>
    <property type="project" value="FlyBase"/>
</dbReference>
<dbReference type="GO" id="GO:0010498">
    <property type="term" value="P:proteasomal protein catabolic process"/>
    <property type="evidence" value="ECO:0000314"/>
    <property type="project" value="FlyBase"/>
</dbReference>
<dbReference type="GO" id="GO:0043161">
    <property type="term" value="P:proteasome-mediated ubiquitin-dependent protein catabolic process"/>
    <property type="evidence" value="ECO:0000318"/>
    <property type="project" value="GO_Central"/>
</dbReference>
<dbReference type="GO" id="GO:0016567">
    <property type="term" value="P:protein ubiquitination"/>
    <property type="evidence" value="ECO:0007669"/>
    <property type="project" value="UniProtKB-UniPathway"/>
</dbReference>
<dbReference type="GO" id="GO:0045676">
    <property type="term" value="P:regulation of R7 cell differentiation"/>
    <property type="evidence" value="ECO:0000250"/>
    <property type="project" value="UniProtKB"/>
</dbReference>
<dbReference type="GO" id="GO:0007423">
    <property type="term" value="P:sensory organ development"/>
    <property type="evidence" value="ECO:0000250"/>
    <property type="project" value="UniProtKB"/>
</dbReference>
<dbReference type="CDD" id="cd03829">
    <property type="entry name" value="Sina"/>
    <property type="match status" value="1"/>
</dbReference>
<dbReference type="FunFam" id="3.30.40.10:FF:000041">
    <property type="entry name" value="E3 ubiquitin-protein ligase SINAT3"/>
    <property type="match status" value="1"/>
</dbReference>
<dbReference type="Gene3D" id="2.60.210.10">
    <property type="entry name" value="Apoptosis, Tumor Necrosis Factor Receptor Associated Protein 2, Chain A"/>
    <property type="match status" value="1"/>
</dbReference>
<dbReference type="Gene3D" id="3.30.40.10">
    <property type="entry name" value="Zinc/RING finger domain, C3HC4 (zinc finger)"/>
    <property type="match status" value="2"/>
</dbReference>
<dbReference type="InterPro" id="IPR018121">
    <property type="entry name" value="7-in-absentia-prot_TRAF-dom"/>
</dbReference>
<dbReference type="InterPro" id="IPR004162">
    <property type="entry name" value="SINA-like_animal"/>
</dbReference>
<dbReference type="InterPro" id="IPR049548">
    <property type="entry name" value="Sina-like_RING"/>
</dbReference>
<dbReference type="InterPro" id="IPR008974">
    <property type="entry name" value="TRAF-like"/>
</dbReference>
<dbReference type="InterPro" id="IPR001841">
    <property type="entry name" value="Znf_RING"/>
</dbReference>
<dbReference type="InterPro" id="IPR013083">
    <property type="entry name" value="Znf_RING/FYVE/PHD"/>
</dbReference>
<dbReference type="InterPro" id="IPR013010">
    <property type="entry name" value="Znf_SIAH"/>
</dbReference>
<dbReference type="PANTHER" id="PTHR45877">
    <property type="entry name" value="E3 UBIQUITIN-PROTEIN LIGASE SIAH2"/>
    <property type="match status" value="1"/>
</dbReference>
<dbReference type="PANTHER" id="PTHR45877:SF2">
    <property type="entry name" value="E3 UBIQUITIN-PROTEIN LIGASE SINA-RELATED"/>
    <property type="match status" value="1"/>
</dbReference>
<dbReference type="Pfam" id="PF21362">
    <property type="entry name" value="Sina_RING"/>
    <property type="match status" value="1"/>
</dbReference>
<dbReference type="Pfam" id="PF03145">
    <property type="entry name" value="Sina_TRAF"/>
    <property type="match status" value="1"/>
</dbReference>
<dbReference type="Pfam" id="PF21361">
    <property type="entry name" value="Sina_ZnF"/>
    <property type="match status" value="1"/>
</dbReference>
<dbReference type="SUPFAM" id="SSF57850">
    <property type="entry name" value="RING/U-box"/>
    <property type="match status" value="1"/>
</dbReference>
<dbReference type="SUPFAM" id="SSF49599">
    <property type="entry name" value="TRAF domain-like"/>
    <property type="match status" value="1"/>
</dbReference>
<dbReference type="PROSITE" id="PS50089">
    <property type="entry name" value="ZF_RING_2"/>
    <property type="match status" value="1"/>
</dbReference>
<dbReference type="PROSITE" id="PS51081">
    <property type="entry name" value="ZF_SIAH"/>
    <property type="match status" value="1"/>
</dbReference>
<evidence type="ECO:0000250" key="1"/>
<evidence type="ECO:0000255" key="2">
    <source>
        <dbReference type="PROSITE-ProRule" id="PRU00175"/>
    </source>
</evidence>
<evidence type="ECO:0000255" key="3">
    <source>
        <dbReference type="PROSITE-ProRule" id="PRU00455"/>
    </source>
</evidence>
<evidence type="ECO:0000256" key="4">
    <source>
        <dbReference type="SAM" id="MobiDB-lite"/>
    </source>
</evidence>
<evidence type="ECO:0000269" key="5">
    <source>
    </source>
</evidence>
<evidence type="ECO:0000269" key="6">
    <source>
    </source>
</evidence>
<evidence type="ECO:0000305" key="7"/>
<organism>
    <name type="scientific">Drosophila melanogaster</name>
    <name type="common">Fruit fly</name>
    <dbReference type="NCBI Taxonomy" id="7227"/>
    <lineage>
        <taxon>Eukaryota</taxon>
        <taxon>Metazoa</taxon>
        <taxon>Ecdysozoa</taxon>
        <taxon>Arthropoda</taxon>
        <taxon>Hexapoda</taxon>
        <taxon>Insecta</taxon>
        <taxon>Pterygota</taxon>
        <taxon>Neoptera</taxon>
        <taxon>Endopterygota</taxon>
        <taxon>Diptera</taxon>
        <taxon>Brachycera</taxon>
        <taxon>Muscomorpha</taxon>
        <taxon>Ephydroidea</taxon>
        <taxon>Drosophilidae</taxon>
        <taxon>Drosophila</taxon>
        <taxon>Sophophora</taxon>
    </lineage>
</organism>
<feature type="chain" id="PRO_0000056178" description="Probable E3 ubiquitin-protein ligase sinah">
    <location>
        <begin position="1"/>
        <end position="351"/>
    </location>
</feature>
<feature type="zinc finger region" description="RING-type" evidence="2">
    <location>
        <begin position="106"/>
        <end position="141"/>
    </location>
</feature>
<feature type="zinc finger region" description="SIAH-type" evidence="3">
    <location>
        <begin position="158"/>
        <end position="218"/>
    </location>
</feature>
<feature type="region of interest" description="Disordered" evidence="4">
    <location>
        <begin position="1"/>
        <end position="38"/>
    </location>
</feature>
<feature type="region of interest" description="SBD">
    <location>
        <begin position="155"/>
        <end position="346"/>
    </location>
</feature>
<feature type="compositionally biased region" description="Polar residues" evidence="4">
    <location>
        <begin position="18"/>
        <end position="27"/>
    </location>
</feature>
<feature type="binding site" evidence="1">
    <location>
        <position position="163"/>
    </location>
    <ligand>
        <name>Zn(2+)</name>
        <dbReference type="ChEBI" id="CHEBI:29105"/>
        <label>1</label>
    </ligand>
</feature>
<feature type="binding site" evidence="1">
    <location>
        <position position="170"/>
    </location>
    <ligand>
        <name>Zn(2+)</name>
        <dbReference type="ChEBI" id="CHEBI:29105"/>
        <label>1</label>
    </ligand>
</feature>
<feature type="binding site" evidence="1">
    <location>
        <position position="182"/>
    </location>
    <ligand>
        <name>Zn(2+)</name>
        <dbReference type="ChEBI" id="CHEBI:29105"/>
        <label>1</label>
    </ligand>
</feature>
<feature type="binding site" evidence="1">
    <location>
        <position position="186"/>
    </location>
    <ligand>
        <name>Zn(2+)</name>
        <dbReference type="ChEBI" id="CHEBI:29105"/>
        <label>1</label>
    </ligand>
</feature>
<feature type="binding site" evidence="1">
    <location>
        <position position="193"/>
    </location>
    <ligand>
        <name>Zn(2+)</name>
        <dbReference type="ChEBI" id="CHEBI:29105"/>
        <label>2</label>
    </ligand>
</feature>
<feature type="binding site" evidence="1">
    <location>
        <position position="200"/>
    </location>
    <ligand>
        <name>Zn(2+)</name>
        <dbReference type="ChEBI" id="CHEBI:29105"/>
        <label>2</label>
    </ligand>
</feature>
<feature type="binding site" evidence="1">
    <location>
        <position position="212"/>
    </location>
    <ligand>
        <name>Zn(2+)</name>
        <dbReference type="ChEBI" id="CHEBI:29105"/>
        <label>2</label>
    </ligand>
</feature>
<feature type="binding site" evidence="1">
    <location>
        <position position="217"/>
    </location>
    <ligand>
        <name>Zn(2+)</name>
        <dbReference type="ChEBI" id="CHEBI:29105"/>
        <label>2</label>
    </ligand>
</feature>
<feature type="sequence conflict" description="In Ref. 3; AAL90183." evidence="7" ref="3">
    <original>N</original>
    <variation>Y</variation>
    <location>
        <position position="351"/>
    </location>
</feature>
<protein>
    <recommendedName>
        <fullName>Probable E3 ubiquitin-protein ligase sinah</fullName>
        <ecNumber>2.3.2.27</ecNumber>
    </recommendedName>
    <alternativeName>
        <fullName evidence="7">RING-type E3 ubiquitin transferase sinah</fullName>
    </alternativeName>
    <alternativeName>
        <fullName>Sina homolog</fullName>
    </alternativeName>
</protein>
<comment type="function">
    <text evidence="5 6">E3 ubiquitin-protein ligase that mediates ubiquitination and subsequent proteasomal degradation of target proteins. The adapter phyl is required to direct the degradation of the two isoforms of the transcriptional repressor Tramtrack (Ttk). E3 ubiquitin ligases accept ubiquitin from an E2 ubiquitin-conjugating enzyme in the form of a thioester and then directly transfers the ubiquitin to targeted substrates. It probably triggers the ubiquitin-mediated degradation of different substrates. A phyl-independent mechanism of degradation exists for isoform beta of ttk that involves motifs in the C-terminus of ttk.</text>
</comment>
<comment type="catalytic activity">
    <reaction>
        <text>S-ubiquitinyl-[E2 ubiquitin-conjugating enzyme]-L-cysteine + [acceptor protein]-L-lysine = [E2 ubiquitin-conjugating enzyme]-L-cysteine + N(6)-ubiquitinyl-[acceptor protein]-L-lysine.</text>
        <dbReference type="EC" id="2.3.2.27"/>
    </reaction>
</comment>
<comment type="pathway">
    <text>Protein modification; protein ubiquitination.</text>
</comment>
<comment type="subunit">
    <text evidence="5 6">Interacts with ebi and phyl.</text>
</comment>
<comment type="interaction">
    <interactant intactId="EBI-152023">
        <id>Q8T3Y0</id>
    </interactant>
    <interactant intactId="EBI-136503">
        <id>Q9W3H5</id>
        <label>Dmel\CG2147</label>
    </interactant>
    <organismsDiffer>false</organismsDiffer>
    <experiments>3</experiments>
</comment>
<comment type="interaction">
    <interactant intactId="EBI-152023">
        <id>Q8T3Y0</id>
    </interactant>
    <interactant intactId="EBI-15117051">
        <id>A1Z6P3</id>
        <label>Eb1</label>
    </interactant>
    <organismsDiffer>false</organismsDiffer>
    <experiments>4</experiments>
</comment>
<comment type="interaction">
    <interactant intactId="EBI-152023">
        <id>Q8T3Y0</id>
    </interactant>
    <interactant intactId="EBI-499102">
        <id>Q9XZ57</id>
        <label>Eb1</label>
    </interactant>
    <organismsDiffer>false</organismsDiffer>
    <experiments>4</experiments>
</comment>
<comment type="interaction">
    <interactant intactId="EBI-152023">
        <id>Q8T3Y0</id>
    </interactant>
    <interactant intactId="EBI-6173284">
        <id>P17789</id>
        <label>ttk</label>
    </interactant>
    <organismsDiffer>false</organismsDiffer>
    <experiments>4</experiments>
</comment>
<comment type="developmental stage">
    <text evidence="5">Expressed in pupae and in adults, with a higher expression in males than females.</text>
</comment>
<comment type="domain">
    <text evidence="1">The RING-type zinc finger domain is essential for ubiquitin ligase activity.</text>
</comment>
<comment type="domain">
    <text evidence="1">The SBD domain (substrate-binding domain) mediates the homodimerization and the interaction with substrate proteins. It is related to the TRAF family.</text>
</comment>
<comment type="disruption phenotype">
    <text evidence="5">Flies are viable. In combination with a mutation in ebi, flies show an extra dorsal central bristle phenotype. Flies that lack both sina and sinah show visible eye and bristle phenotypes, which can be explained by an inability to degrade the neuronal repressor, Tramtrack.</text>
</comment>
<comment type="similarity">
    <text evidence="7">Belongs to the SINA (Seven in absentia) family.</text>
</comment>
<sequence>MSVRNSRPQLSWPERVSPQRTIDTPTASGEMLTRRQSAPALVVPPEETTHVVVVKRQSPDAAAAGELVPSRRKDSVAVQSGIVATGPLDTTRSGARDDFLMALLECPVCFGYIMPPIMQCPRGHLICSTCRSKLTICPVCRVFMTNIRSLAMEKVASKLIFPCKHSHFGCRARLSYAEKTKHEEDCECRPYFCPYPDDKCSWQGPLRDVYQHLMSSHENVITMEGNDIIFLATNVNLEGALDWTMVQSCHGRHFLLSLEKINLGEDCQQYFTACRMIGSMKDAAEFVYNISLEAYNRTLRWQSKPRSIRENFSSFTNADFLVLNKHTVELFSEDGNLALNVVIRKVEERTN</sequence>
<keyword id="KW-0479">Metal-binding</keyword>
<keyword id="KW-1185">Reference proteome</keyword>
<keyword id="KW-0808">Transferase</keyword>
<keyword id="KW-0833">Ubl conjugation pathway</keyword>
<keyword id="KW-0862">Zinc</keyword>
<keyword id="KW-0863">Zinc-finger</keyword>
<proteinExistence type="evidence at protein level"/>
<gene>
    <name type="primary">sinah</name>
    <name type="ORF">CG13030</name>
</gene>